<protein>
    <recommendedName>
        <fullName evidence="1">NAD-capped RNA hydrolase NudC</fullName>
        <shortName evidence="1">DeNADding enzyme NudC</shortName>
        <ecNumber evidence="1">3.6.1.-</ecNumber>
    </recommendedName>
    <alternativeName>
        <fullName evidence="1">NADH pyrophosphatase</fullName>
        <ecNumber evidence="1">3.6.1.22</ecNumber>
    </alternativeName>
</protein>
<feature type="chain" id="PRO_0000056975" description="NAD-capped RNA hydrolase NudC">
    <location>
        <begin position="1"/>
        <end position="257"/>
    </location>
</feature>
<feature type="domain" description="Nudix hydrolase" evidence="1">
    <location>
        <begin position="125"/>
        <end position="248"/>
    </location>
</feature>
<feature type="short sequence motif" description="Nudix box" evidence="1">
    <location>
        <begin position="159"/>
        <end position="180"/>
    </location>
</feature>
<feature type="binding site" evidence="1">
    <location>
        <position position="69"/>
    </location>
    <ligand>
        <name>substrate</name>
    </ligand>
</feature>
<feature type="binding site" evidence="1">
    <location>
        <position position="98"/>
    </location>
    <ligand>
        <name>Zn(2+)</name>
        <dbReference type="ChEBI" id="CHEBI:29105"/>
    </ligand>
</feature>
<feature type="binding site" evidence="1">
    <location>
        <position position="101"/>
    </location>
    <ligand>
        <name>Zn(2+)</name>
        <dbReference type="ChEBI" id="CHEBI:29105"/>
    </ligand>
</feature>
<feature type="binding site" evidence="1">
    <location>
        <position position="111"/>
    </location>
    <ligand>
        <name>substrate</name>
    </ligand>
</feature>
<feature type="binding site" evidence="1">
    <location>
        <position position="116"/>
    </location>
    <ligand>
        <name>Zn(2+)</name>
        <dbReference type="ChEBI" id="CHEBI:29105"/>
    </ligand>
</feature>
<feature type="binding site" evidence="1">
    <location>
        <position position="119"/>
    </location>
    <ligand>
        <name>Zn(2+)</name>
        <dbReference type="ChEBI" id="CHEBI:29105"/>
    </ligand>
</feature>
<feature type="binding site" evidence="1">
    <location>
        <position position="124"/>
    </location>
    <ligand>
        <name>substrate</name>
    </ligand>
</feature>
<feature type="binding site" evidence="1">
    <location>
        <position position="158"/>
    </location>
    <ligand>
        <name>a divalent metal cation</name>
        <dbReference type="ChEBI" id="CHEBI:60240"/>
        <label>1</label>
    </ligand>
</feature>
<feature type="binding site" evidence="1">
    <location>
        <position position="174"/>
    </location>
    <ligand>
        <name>a divalent metal cation</name>
        <dbReference type="ChEBI" id="CHEBI:60240"/>
        <label>2</label>
    </ligand>
</feature>
<feature type="binding site" evidence="1">
    <location>
        <position position="174"/>
    </location>
    <ligand>
        <name>a divalent metal cation</name>
        <dbReference type="ChEBI" id="CHEBI:60240"/>
        <label>3</label>
    </ligand>
</feature>
<feature type="binding site" evidence="1">
    <location>
        <position position="178"/>
    </location>
    <ligand>
        <name>a divalent metal cation</name>
        <dbReference type="ChEBI" id="CHEBI:60240"/>
        <label>1</label>
    </ligand>
</feature>
<feature type="binding site" evidence="1">
    <location>
        <position position="178"/>
    </location>
    <ligand>
        <name>a divalent metal cation</name>
        <dbReference type="ChEBI" id="CHEBI:60240"/>
        <label>3</label>
    </ligand>
</feature>
<feature type="binding site" evidence="1">
    <location>
        <begin position="192"/>
        <end position="199"/>
    </location>
    <ligand>
        <name>substrate</name>
    </ligand>
</feature>
<feature type="binding site" evidence="1">
    <location>
        <position position="219"/>
    </location>
    <ligand>
        <name>a divalent metal cation</name>
        <dbReference type="ChEBI" id="CHEBI:60240"/>
        <label>1</label>
    </ligand>
</feature>
<feature type="binding site" evidence="1">
    <location>
        <position position="219"/>
    </location>
    <ligand>
        <name>a divalent metal cation</name>
        <dbReference type="ChEBI" id="CHEBI:60240"/>
        <label>3</label>
    </ligand>
</feature>
<feature type="binding site" evidence="1">
    <location>
        <position position="241"/>
    </location>
    <ligand>
        <name>substrate</name>
    </ligand>
</feature>
<proteinExistence type="inferred from homology"/>
<dbReference type="EC" id="3.6.1.-" evidence="1"/>
<dbReference type="EC" id="3.6.1.22" evidence="1"/>
<dbReference type="EMBL" id="AL513382">
    <property type="protein sequence ID" value="CAD09478.1"/>
    <property type="molecule type" value="Genomic_DNA"/>
</dbReference>
<dbReference type="EMBL" id="AE014613">
    <property type="protein sequence ID" value="AAO70981.1"/>
    <property type="molecule type" value="Genomic_DNA"/>
</dbReference>
<dbReference type="RefSeq" id="NP_457908.1">
    <property type="nucleotide sequence ID" value="NC_003198.1"/>
</dbReference>
<dbReference type="RefSeq" id="WP_000373954.1">
    <property type="nucleotide sequence ID" value="NZ_WSUR01000043.1"/>
</dbReference>
<dbReference type="SMR" id="Q8Z328"/>
<dbReference type="STRING" id="220341.gene:17587579"/>
<dbReference type="KEGG" id="stt:t3465"/>
<dbReference type="KEGG" id="sty:STY3719"/>
<dbReference type="PATRIC" id="fig|220341.7.peg.3791"/>
<dbReference type="eggNOG" id="COG2816">
    <property type="taxonomic scope" value="Bacteria"/>
</dbReference>
<dbReference type="HOGENOM" id="CLU_037162_0_1_6"/>
<dbReference type="OMA" id="TWAREHR"/>
<dbReference type="OrthoDB" id="9791656at2"/>
<dbReference type="Proteomes" id="UP000000541">
    <property type="component" value="Chromosome"/>
</dbReference>
<dbReference type="Proteomes" id="UP000002670">
    <property type="component" value="Chromosome"/>
</dbReference>
<dbReference type="GO" id="GO:0005829">
    <property type="term" value="C:cytosol"/>
    <property type="evidence" value="ECO:0007669"/>
    <property type="project" value="TreeGrafter"/>
</dbReference>
<dbReference type="GO" id="GO:0000287">
    <property type="term" value="F:magnesium ion binding"/>
    <property type="evidence" value="ECO:0007669"/>
    <property type="project" value="UniProtKB-UniRule"/>
</dbReference>
<dbReference type="GO" id="GO:0030145">
    <property type="term" value="F:manganese ion binding"/>
    <property type="evidence" value="ECO:0007669"/>
    <property type="project" value="UniProtKB-UniRule"/>
</dbReference>
<dbReference type="GO" id="GO:0000210">
    <property type="term" value="F:NAD+ diphosphatase activity"/>
    <property type="evidence" value="ECO:0007669"/>
    <property type="project" value="UniProtKB-UniRule"/>
</dbReference>
<dbReference type="GO" id="GO:0035529">
    <property type="term" value="F:NADH pyrophosphatase activity"/>
    <property type="evidence" value="ECO:0007669"/>
    <property type="project" value="TreeGrafter"/>
</dbReference>
<dbReference type="GO" id="GO:0110153">
    <property type="term" value="F:RNA NAD-cap (NMN-forming) hydrolase activity"/>
    <property type="evidence" value="ECO:0007669"/>
    <property type="project" value="RHEA"/>
</dbReference>
<dbReference type="GO" id="GO:0008270">
    <property type="term" value="F:zinc ion binding"/>
    <property type="evidence" value="ECO:0007669"/>
    <property type="project" value="UniProtKB-UniRule"/>
</dbReference>
<dbReference type="GO" id="GO:0019677">
    <property type="term" value="P:NAD catabolic process"/>
    <property type="evidence" value="ECO:0007669"/>
    <property type="project" value="TreeGrafter"/>
</dbReference>
<dbReference type="GO" id="GO:0006734">
    <property type="term" value="P:NADH metabolic process"/>
    <property type="evidence" value="ECO:0007669"/>
    <property type="project" value="TreeGrafter"/>
</dbReference>
<dbReference type="GO" id="GO:0006742">
    <property type="term" value="P:NADP catabolic process"/>
    <property type="evidence" value="ECO:0007669"/>
    <property type="project" value="TreeGrafter"/>
</dbReference>
<dbReference type="CDD" id="cd03429">
    <property type="entry name" value="NUDIX_NADH_pyrophosphatase_Nudt13"/>
    <property type="match status" value="1"/>
</dbReference>
<dbReference type="FunFam" id="3.90.79.10:FF:000004">
    <property type="entry name" value="NADH pyrophosphatase"/>
    <property type="match status" value="1"/>
</dbReference>
<dbReference type="FunFam" id="3.90.79.20:FF:000001">
    <property type="entry name" value="NADH pyrophosphatase"/>
    <property type="match status" value="1"/>
</dbReference>
<dbReference type="Gene3D" id="3.90.79.20">
    <property type="match status" value="1"/>
</dbReference>
<dbReference type="Gene3D" id="3.90.79.10">
    <property type="entry name" value="Nucleoside Triphosphate Pyrophosphohydrolase"/>
    <property type="match status" value="1"/>
</dbReference>
<dbReference type="HAMAP" id="MF_00297">
    <property type="entry name" value="Nudix_NudC"/>
    <property type="match status" value="1"/>
</dbReference>
<dbReference type="InterPro" id="IPR050241">
    <property type="entry name" value="NAD-cap_RNA_hydrolase_NudC"/>
</dbReference>
<dbReference type="InterPro" id="IPR049734">
    <property type="entry name" value="NudC-like_C"/>
</dbReference>
<dbReference type="InterPro" id="IPR015797">
    <property type="entry name" value="NUDIX_hydrolase-like_dom_sf"/>
</dbReference>
<dbReference type="InterPro" id="IPR020084">
    <property type="entry name" value="NUDIX_hydrolase_CS"/>
</dbReference>
<dbReference type="InterPro" id="IPR000086">
    <property type="entry name" value="NUDIX_hydrolase_dom"/>
</dbReference>
<dbReference type="InterPro" id="IPR022925">
    <property type="entry name" value="RNA_Hydrolase_NudC"/>
</dbReference>
<dbReference type="InterPro" id="IPR015376">
    <property type="entry name" value="Znr_NADH_PPase"/>
</dbReference>
<dbReference type="NCBIfam" id="NF001299">
    <property type="entry name" value="PRK00241.1"/>
    <property type="match status" value="1"/>
</dbReference>
<dbReference type="PANTHER" id="PTHR42904:SF6">
    <property type="entry name" value="NAD-CAPPED RNA HYDROLASE NUDT12"/>
    <property type="match status" value="1"/>
</dbReference>
<dbReference type="PANTHER" id="PTHR42904">
    <property type="entry name" value="NUDIX HYDROLASE, NUDC SUBFAMILY"/>
    <property type="match status" value="1"/>
</dbReference>
<dbReference type="Pfam" id="PF00293">
    <property type="entry name" value="NUDIX"/>
    <property type="match status" value="1"/>
</dbReference>
<dbReference type="Pfam" id="PF09297">
    <property type="entry name" value="Zn_ribbon_NUD"/>
    <property type="match status" value="1"/>
</dbReference>
<dbReference type="SUPFAM" id="SSF55811">
    <property type="entry name" value="Nudix"/>
    <property type="match status" value="2"/>
</dbReference>
<dbReference type="PROSITE" id="PS51462">
    <property type="entry name" value="NUDIX"/>
    <property type="match status" value="1"/>
</dbReference>
<dbReference type="PROSITE" id="PS00893">
    <property type="entry name" value="NUDIX_BOX"/>
    <property type="match status" value="1"/>
</dbReference>
<organism>
    <name type="scientific">Salmonella typhi</name>
    <dbReference type="NCBI Taxonomy" id="90370"/>
    <lineage>
        <taxon>Bacteria</taxon>
        <taxon>Pseudomonadati</taxon>
        <taxon>Pseudomonadota</taxon>
        <taxon>Gammaproteobacteria</taxon>
        <taxon>Enterobacterales</taxon>
        <taxon>Enterobacteriaceae</taxon>
        <taxon>Salmonella</taxon>
    </lineage>
</organism>
<comment type="function">
    <text evidence="1">mRNA decapping enzyme that specifically removes the nicotinamide adenine dinucleotide (NAD) cap from a subset of mRNAs by hydrolyzing the diphosphate linkage to produce nicotinamide mononucleotide (NMN) and 5' monophosphate mRNA. The NAD-cap is present at the 5'-end of some mRNAs and stabilizes RNA against 5'-processing. Has preference for mRNAs with a 5'-end purine. Catalyzes the hydrolysis of a broad range of dinucleotide pyrophosphates.</text>
</comment>
<comment type="catalytic activity">
    <reaction evidence="1">
        <text>a 5'-end NAD(+)-phospho-ribonucleoside in mRNA + H2O = a 5'-end phospho-adenosine-phospho-ribonucleoside in mRNA + beta-nicotinamide D-ribonucleotide + 2 H(+)</text>
        <dbReference type="Rhea" id="RHEA:60876"/>
        <dbReference type="Rhea" id="RHEA-COMP:15698"/>
        <dbReference type="Rhea" id="RHEA-COMP:15719"/>
        <dbReference type="ChEBI" id="CHEBI:14649"/>
        <dbReference type="ChEBI" id="CHEBI:15377"/>
        <dbReference type="ChEBI" id="CHEBI:15378"/>
        <dbReference type="ChEBI" id="CHEBI:144029"/>
        <dbReference type="ChEBI" id="CHEBI:144051"/>
    </reaction>
    <physiologicalReaction direction="left-to-right" evidence="1">
        <dbReference type="Rhea" id="RHEA:60877"/>
    </physiologicalReaction>
</comment>
<comment type="catalytic activity">
    <reaction evidence="1">
        <text>NAD(+) + H2O = beta-nicotinamide D-ribonucleotide + AMP + 2 H(+)</text>
        <dbReference type="Rhea" id="RHEA:11800"/>
        <dbReference type="ChEBI" id="CHEBI:14649"/>
        <dbReference type="ChEBI" id="CHEBI:15377"/>
        <dbReference type="ChEBI" id="CHEBI:15378"/>
        <dbReference type="ChEBI" id="CHEBI:57540"/>
        <dbReference type="ChEBI" id="CHEBI:456215"/>
        <dbReference type="EC" id="3.6.1.22"/>
    </reaction>
</comment>
<comment type="catalytic activity">
    <reaction evidence="1">
        <text>NADH + H2O = reduced beta-nicotinamide D-ribonucleotide + AMP + 2 H(+)</text>
        <dbReference type="Rhea" id="RHEA:48868"/>
        <dbReference type="ChEBI" id="CHEBI:15377"/>
        <dbReference type="ChEBI" id="CHEBI:15378"/>
        <dbReference type="ChEBI" id="CHEBI:57945"/>
        <dbReference type="ChEBI" id="CHEBI:90832"/>
        <dbReference type="ChEBI" id="CHEBI:456215"/>
        <dbReference type="EC" id="3.6.1.22"/>
    </reaction>
</comment>
<comment type="cofactor">
    <cofactor evidence="1">
        <name>Mg(2+)</name>
        <dbReference type="ChEBI" id="CHEBI:18420"/>
    </cofactor>
    <cofactor evidence="1">
        <name>Mn(2+)</name>
        <dbReference type="ChEBI" id="CHEBI:29035"/>
    </cofactor>
    <text evidence="1">Divalent metal cations. Mg(2+) or Mn(2+).</text>
</comment>
<comment type="cofactor">
    <cofactor evidence="1">
        <name>Zn(2+)</name>
        <dbReference type="ChEBI" id="CHEBI:29105"/>
    </cofactor>
    <text evidence="1">Binds 1 zinc ion per subunit.</text>
</comment>
<comment type="subunit">
    <text evidence="1">Homodimer.</text>
</comment>
<comment type="similarity">
    <text evidence="1">Belongs to the Nudix hydrolase family. NudC subfamily.</text>
</comment>
<gene>
    <name evidence="1" type="primary">nudC</name>
    <name type="ordered locus">STY3719</name>
    <name type="ordered locus">t3465</name>
</gene>
<reference key="1">
    <citation type="journal article" date="2001" name="Nature">
        <title>Complete genome sequence of a multiple drug resistant Salmonella enterica serovar Typhi CT18.</title>
        <authorList>
            <person name="Parkhill J."/>
            <person name="Dougan G."/>
            <person name="James K.D."/>
            <person name="Thomson N.R."/>
            <person name="Pickard D."/>
            <person name="Wain J."/>
            <person name="Churcher C.M."/>
            <person name="Mungall K.L."/>
            <person name="Bentley S.D."/>
            <person name="Holden M.T.G."/>
            <person name="Sebaihia M."/>
            <person name="Baker S."/>
            <person name="Basham D."/>
            <person name="Brooks K."/>
            <person name="Chillingworth T."/>
            <person name="Connerton P."/>
            <person name="Cronin A."/>
            <person name="Davis P."/>
            <person name="Davies R.M."/>
            <person name="Dowd L."/>
            <person name="White N."/>
            <person name="Farrar J."/>
            <person name="Feltwell T."/>
            <person name="Hamlin N."/>
            <person name="Haque A."/>
            <person name="Hien T.T."/>
            <person name="Holroyd S."/>
            <person name="Jagels K."/>
            <person name="Krogh A."/>
            <person name="Larsen T.S."/>
            <person name="Leather S."/>
            <person name="Moule S."/>
            <person name="O'Gaora P."/>
            <person name="Parry C."/>
            <person name="Quail M.A."/>
            <person name="Rutherford K.M."/>
            <person name="Simmonds M."/>
            <person name="Skelton J."/>
            <person name="Stevens K."/>
            <person name="Whitehead S."/>
            <person name="Barrell B.G."/>
        </authorList>
    </citation>
    <scope>NUCLEOTIDE SEQUENCE [LARGE SCALE GENOMIC DNA]</scope>
    <source>
        <strain>CT18</strain>
    </source>
</reference>
<reference key="2">
    <citation type="journal article" date="2003" name="J. Bacteriol.">
        <title>Comparative genomics of Salmonella enterica serovar Typhi strains Ty2 and CT18.</title>
        <authorList>
            <person name="Deng W."/>
            <person name="Liou S.-R."/>
            <person name="Plunkett G. III"/>
            <person name="Mayhew G.F."/>
            <person name="Rose D.J."/>
            <person name="Burland V."/>
            <person name="Kodoyianni V."/>
            <person name="Schwartz D.C."/>
            <person name="Blattner F.R."/>
        </authorList>
    </citation>
    <scope>NUCLEOTIDE SEQUENCE [LARGE SCALE GENOMIC DNA]</scope>
    <source>
        <strain>ATCC 700931 / Ty2</strain>
    </source>
</reference>
<name>NUDC_SALTI</name>
<evidence type="ECO:0000255" key="1">
    <source>
        <dbReference type="HAMAP-Rule" id="MF_00297"/>
    </source>
</evidence>
<keyword id="KW-0378">Hydrolase</keyword>
<keyword id="KW-0460">Magnesium</keyword>
<keyword id="KW-0464">Manganese</keyword>
<keyword id="KW-0479">Metal-binding</keyword>
<keyword id="KW-0520">NAD</keyword>
<keyword id="KW-0862">Zinc</keyword>
<accession>Q8Z328</accession>
<sequence>MDRIIEKLESGWWIVSHEQKLWLPYGELPHGLAANFDLVGQRALRIGEWQGEPVWLVLQHRRHDMGSVRQVIDQDAGLFQLAGRGVQLAEFYRSHKFCGYCGHPMHPSKTEWAMLCSHCRDRYYPQIAPCIIVAIRREDSILLARHVRHRNGVHTVLAGFVEVGETLEQAVAREVMEESGIKVKNLRYVTSQPWPFPQSLMTAFMAEYDSGEIVIDPKELLEANWYRYDDLPLLPPPGTVARRLIEDTVAMCRAEYD</sequence>